<proteinExistence type="inferred from homology"/>
<sequence length="160" mass="17416">MGVTKKPDLTDPILRAKLAKGMGHNYYGEPAWPNDLLYIFPVVILGTIACTIGLAVLDPSMIGEPANPFATPLEILPEWYFFPVFQILRTVPNKLLGVLLMASVPVGLLTVPFLENVNKFQNPFRRPVATTVFLIGTAVAIWLGIGAALPIDKSLTLGLF</sequence>
<geneLocation type="chloroplast"/>
<feature type="chain" id="PRO_0000255565" description="Cytochrome b6-f complex subunit 4">
    <location>
        <begin position="1"/>
        <end position="160"/>
    </location>
</feature>
<feature type="transmembrane region" description="Helical" evidence="2">
    <location>
        <begin position="36"/>
        <end position="56"/>
    </location>
</feature>
<feature type="transmembrane region" description="Helical" evidence="2">
    <location>
        <begin position="95"/>
        <end position="115"/>
    </location>
</feature>
<feature type="transmembrane region" description="Helical" evidence="2">
    <location>
        <begin position="131"/>
        <end position="151"/>
    </location>
</feature>
<dbReference type="EMBL" id="DQ229107">
    <property type="protein sequence ID" value="ABA61921.1"/>
    <property type="molecule type" value="Genomic_DNA"/>
</dbReference>
<dbReference type="RefSeq" id="YP_635777.1">
    <property type="nucleotide sequence ID" value="NC_008097.1"/>
</dbReference>
<dbReference type="SMR" id="Q1ACH0"/>
<dbReference type="GeneID" id="4100290"/>
<dbReference type="GO" id="GO:0009535">
    <property type="term" value="C:chloroplast thylakoid membrane"/>
    <property type="evidence" value="ECO:0007669"/>
    <property type="project" value="UniProtKB-SubCell"/>
</dbReference>
<dbReference type="GO" id="GO:0005739">
    <property type="term" value="C:mitochondrion"/>
    <property type="evidence" value="ECO:0007669"/>
    <property type="project" value="GOC"/>
</dbReference>
<dbReference type="GO" id="GO:0045158">
    <property type="term" value="F:electron transporter, transferring electrons within cytochrome b6/f complex of photosystem II activity"/>
    <property type="evidence" value="ECO:0007669"/>
    <property type="project" value="UniProtKB-UniRule"/>
</dbReference>
<dbReference type="GO" id="GO:0045156">
    <property type="term" value="F:electron transporter, transferring electrons within the cyclic electron transport pathway of photosynthesis activity"/>
    <property type="evidence" value="ECO:0007669"/>
    <property type="project" value="InterPro"/>
</dbReference>
<dbReference type="GO" id="GO:0008121">
    <property type="term" value="F:ubiquinol-cytochrome-c reductase activity"/>
    <property type="evidence" value="ECO:0007669"/>
    <property type="project" value="TreeGrafter"/>
</dbReference>
<dbReference type="GO" id="GO:0006122">
    <property type="term" value="P:mitochondrial electron transport, ubiquinol to cytochrome c"/>
    <property type="evidence" value="ECO:0007669"/>
    <property type="project" value="TreeGrafter"/>
</dbReference>
<dbReference type="GO" id="GO:0009767">
    <property type="term" value="P:photosynthetic electron transport chain"/>
    <property type="evidence" value="ECO:0007669"/>
    <property type="project" value="InterPro"/>
</dbReference>
<dbReference type="CDD" id="cd00290">
    <property type="entry name" value="cytochrome_b_C"/>
    <property type="match status" value="1"/>
</dbReference>
<dbReference type="FunFam" id="1.10.287.980:FF:000001">
    <property type="entry name" value="Cytochrome b6-f complex subunit 4"/>
    <property type="match status" value="1"/>
</dbReference>
<dbReference type="FunFam" id="1.20.5.510:FF:000002">
    <property type="entry name" value="Cytochrome b6-f complex subunit 4"/>
    <property type="match status" value="1"/>
</dbReference>
<dbReference type="Gene3D" id="1.10.287.980">
    <property type="entry name" value="plastocyanin oxidoreductase"/>
    <property type="match status" value="1"/>
</dbReference>
<dbReference type="Gene3D" id="1.20.5.510">
    <property type="entry name" value="Single helix bin"/>
    <property type="match status" value="1"/>
</dbReference>
<dbReference type="HAMAP" id="MF_01344">
    <property type="entry name" value="Cytb6_f_subIV"/>
    <property type="match status" value="1"/>
</dbReference>
<dbReference type="InterPro" id="IPR005798">
    <property type="entry name" value="Cyt_b/b6_C"/>
</dbReference>
<dbReference type="InterPro" id="IPR036150">
    <property type="entry name" value="Cyt_b/b6_C_sf"/>
</dbReference>
<dbReference type="InterPro" id="IPR005870">
    <property type="entry name" value="Cyt_b6/f_cplx_suIV"/>
</dbReference>
<dbReference type="InterPro" id="IPR048260">
    <property type="entry name" value="Cytochrome_b_C_euk/bac"/>
</dbReference>
<dbReference type="NCBIfam" id="TIGR01156">
    <property type="entry name" value="cytb6_f_IV"/>
    <property type="match status" value="1"/>
</dbReference>
<dbReference type="PANTHER" id="PTHR19271">
    <property type="entry name" value="CYTOCHROME B"/>
    <property type="match status" value="1"/>
</dbReference>
<dbReference type="PANTHER" id="PTHR19271:SF41">
    <property type="entry name" value="CYTOCHROME B_B6 C-TERMINAL REGION PROFILE DOMAIN-CONTAINING PROTEIN"/>
    <property type="match status" value="1"/>
</dbReference>
<dbReference type="Pfam" id="PF00032">
    <property type="entry name" value="Cytochrom_B_C"/>
    <property type="match status" value="1"/>
</dbReference>
<dbReference type="PIRSF" id="PIRSF000033">
    <property type="entry name" value="B6f_17K"/>
    <property type="match status" value="1"/>
</dbReference>
<dbReference type="SUPFAM" id="SSF81648">
    <property type="entry name" value="a domain/subunit of cytochrome bc1 complex (Ubiquinol-cytochrome c reductase)"/>
    <property type="match status" value="1"/>
</dbReference>
<dbReference type="PROSITE" id="PS51003">
    <property type="entry name" value="CYTB_CTER"/>
    <property type="match status" value="1"/>
</dbReference>
<organism>
    <name type="scientific">Chara vulgaris</name>
    <name type="common">Common stonewort</name>
    <dbReference type="NCBI Taxonomy" id="55564"/>
    <lineage>
        <taxon>Eukaryota</taxon>
        <taxon>Viridiplantae</taxon>
        <taxon>Streptophyta</taxon>
        <taxon>Charophyceae</taxon>
        <taxon>Charales</taxon>
        <taxon>Characeae</taxon>
        <taxon>Chara</taxon>
    </lineage>
</organism>
<accession>Q1ACH0</accession>
<comment type="function">
    <text evidence="2">Component of the cytochrome b6-f complex, which mediates electron transfer between photosystem II (PSII) and photosystem I (PSI), cyclic electron flow around PSI, and state transitions.</text>
</comment>
<comment type="subunit">
    <text evidence="1">The 4 large subunits of the cytochrome b6-f complex are cytochrome b6, subunit IV (17 kDa polypeptide, petD), cytochrome f and the Rieske protein, while the 4 small subunits are petG, petL, petM and petN. The complex functions as a dimer (By similarity).</text>
</comment>
<comment type="subcellular location">
    <subcellularLocation>
        <location evidence="2">Plastid</location>
        <location evidence="2">Chloroplast thylakoid membrane</location>
        <topology evidence="2">Multi-pass membrane protein</topology>
    </subcellularLocation>
</comment>
<comment type="similarity">
    <text evidence="2">Belongs to the cytochrome b family. PetD subfamily.</text>
</comment>
<keyword id="KW-0150">Chloroplast</keyword>
<keyword id="KW-0249">Electron transport</keyword>
<keyword id="KW-0472">Membrane</keyword>
<keyword id="KW-0602">Photosynthesis</keyword>
<keyword id="KW-0934">Plastid</keyword>
<keyword id="KW-0793">Thylakoid</keyword>
<keyword id="KW-0812">Transmembrane</keyword>
<keyword id="KW-1133">Transmembrane helix</keyword>
<keyword id="KW-0813">Transport</keyword>
<gene>
    <name evidence="2" type="primary">petD</name>
</gene>
<protein>
    <recommendedName>
        <fullName evidence="2">Cytochrome b6-f complex subunit 4</fullName>
    </recommendedName>
    <alternativeName>
        <fullName evidence="2">17 kDa polypeptide</fullName>
    </alternativeName>
</protein>
<evidence type="ECO:0000250" key="1"/>
<evidence type="ECO:0000255" key="2">
    <source>
        <dbReference type="HAMAP-Rule" id="MF_01344"/>
    </source>
</evidence>
<name>PETD_CHAVU</name>
<reference key="1">
    <citation type="journal article" date="2006" name="Mol. Biol. Evol.">
        <title>The chloroplast genome sequence of Chara vulgaris sheds new light into the closest green algal relatives of land plants.</title>
        <authorList>
            <person name="Turmel M."/>
            <person name="Otis C."/>
            <person name="Lemieux C."/>
        </authorList>
    </citation>
    <scope>NUCLEOTIDE SEQUENCE [LARGE SCALE GENOMIC DNA]</scope>
</reference>